<organism>
    <name type="scientific">Mycoplasma mycoides subsp. mycoides SC (strain CCUG 32753 / NCTC 10114 / PG1)</name>
    <dbReference type="NCBI Taxonomy" id="272632"/>
    <lineage>
        <taxon>Bacteria</taxon>
        <taxon>Bacillati</taxon>
        <taxon>Mycoplasmatota</taxon>
        <taxon>Mollicutes</taxon>
        <taxon>Mycoplasmataceae</taxon>
        <taxon>Mycoplasma</taxon>
    </lineage>
</organism>
<evidence type="ECO:0000255" key="1">
    <source>
        <dbReference type="HAMAP-Rule" id="MF_00141"/>
    </source>
</evidence>
<gene>
    <name evidence="1" type="primary">efp</name>
    <name type="ordered locus">MSC_0451</name>
</gene>
<accession>Q6MTF7</accession>
<reference key="1">
    <citation type="journal article" date="2004" name="Genome Res.">
        <title>The genome sequence of Mycoplasma mycoides subsp. mycoides SC type strain PG1T, the causative agent of contagious bovine pleuropneumonia (CBPP).</title>
        <authorList>
            <person name="Westberg J."/>
            <person name="Persson A."/>
            <person name="Holmberg A."/>
            <person name="Goesmann A."/>
            <person name="Lundeberg J."/>
            <person name="Johansson K.-E."/>
            <person name="Pettersson B."/>
            <person name="Uhlen M."/>
        </authorList>
    </citation>
    <scope>NUCLEOTIDE SEQUENCE [LARGE SCALE GENOMIC DNA]</scope>
    <source>
        <strain>CCUG 32753 / NCTC 10114 / PG1</strain>
    </source>
</reference>
<sequence length="184" mass="20474">MSVNDLRPGTTFLYDGNIYLVLEQAFSKTGRQQGKVTVKAKNMRTGARVELTFTGGEKVDKAMIERKEMQYLYNDGNDAYLMNTETYEQVSIPMTRLEWEKNFLVDGLMINMTEFENEVLGIDLPVKVELTVVEAEAAVKGDTTSGAQKKAILETGLEIMVPLFVNQGTKIIVSSADGKYVGRA</sequence>
<feature type="chain" id="PRO_0000094287" description="Elongation factor P">
    <location>
        <begin position="1"/>
        <end position="184"/>
    </location>
</feature>
<dbReference type="EMBL" id="BX293980">
    <property type="protein sequence ID" value="CAE77079.1"/>
    <property type="molecule type" value="Genomic_DNA"/>
</dbReference>
<dbReference type="RefSeq" id="NP_975437.1">
    <property type="nucleotide sequence ID" value="NC_005364.2"/>
</dbReference>
<dbReference type="RefSeq" id="WP_011166635.1">
    <property type="nucleotide sequence ID" value="NC_005364.2"/>
</dbReference>
<dbReference type="SMR" id="Q6MTF7"/>
<dbReference type="STRING" id="272632.MSC_0451"/>
<dbReference type="GeneID" id="93426401"/>
<dbReference type="KEGG" id="mmy:MSC_0451"/>
<dbReference type="PATRIC" id="fig|272632.4.peg.491"/>
<dbReference type="eggNOG" id="COG0231">
    <property type="taxonomic scope" value="Bacteria"/>
</dbReference>
<dbReference type="HOGENOM" id="CLU_074944_2_1_14"/>
<dbReference type="UniPathway" id="UPA00345"/>
<dbReference type="Proteomes" id="UP000001016">
    <property type="component" value="Chromosome"/>
</dbReference>
<dbReference type="GO" id="GO:0005737">
    <property type="term" value="C:cytoplasm"/>
    <property type="evidence" value="ECO:0007669"/>
    <property type="project" value="UniProtKB-SubCell"/>
</dbReference>
<dbReference type="GO" id="GO:0003746">
    <property type="term" value="F:translation elongation factor activity"/>
    <property type="evidence" value="ECO:0007669"/>
    <property type="project" value="UniProtKB-UniRule"/>
</dbReference>
<dbReference type="GO" id="GO:0043043">
    <property type="term" value="P:peptide biosynthetic process"/>
    <property type="evidence" value="ECO:0007669"/>
    <property type="project" value="InterPro"/>
</dbReference>
<dbReference type="CDD" id="cd04470">
    <property type="entry name" value="S1_EF-P_repeat_1"/>
    <property type="match status" value="1"/>
</dbReference>
<dbReference type="CDD" id="cd05794">
    <property type="entry name" value="S1_EF-P_repeat_2"/>
    <property type="match status" value="1"/>
</dbReference>
<dbReference type="FunFam" id="2.30.30.30:FF:000003">
    <property type="entry name" value="Elongation factor P"/>
    <property type="match status" value="1"/>
</dbReference>
<dbReference type="FunFam" id="2.40.50.140:FF:000004">
    <property type="entry name" value="Elongation factor P"/>
    <property type="match status" value="1"/>
</dbReference>
<dbReference type="FunFam" id="2.40.50.140:FF:000009">
    <property type="entry name" value="Elongation factor P"/>
    <property type="match status" value="1"/>
</dbReference>
<dbReference type="Gene3D" id="2.30.30.30">
    <property type="match status" value="1"/>
</dbReference>
<dbReference type="Gene3D" id="2.40.50.140">
    <property type="entry name" value="Nucleic acid-binding proteins"/>
    <property type="match status" value="2"/>
</dbReference>
<dbReference type="HAMAP" id="MF_00141">
    <property type="entry name" value="EF_P"/>
    <property type="match status" value="1"/>
</dbReference>
<dbReference type="InterPro" id="IPR015365">
    <property type="entry name" value="Elong-fact-P_C"/>
</dbReference>
<dbReference type="InterPro" id="IPR012340">
    <property type="entry name" value="NA-bd_OB-fold"/>
</dbReference>
<dbReference type="InterPro" id="IPR014722">
    <property type="entry name" value="Rib_uL2_dom2"/>
</dbReference>
<dbReference type="InterPro" id="IPR020599">
    <property type="entry name" value="Transl_elong_fac_P/YeiP"/>
</dbReference>
<dbReference type="InterPro" id="IPR013185">
    <property type="entry name" value="Transl_elong_KOW-like"/>
</dbReference>
<dbReference type="InterPro" id="IPR001059">
    <property type="entry name" value="Transl_elong_P/YeiP_cen"/>
</dbReference>
<dbReference type="InterPro" id="IPR013852">
    <property type="entry name" value="Transl_elong_P/YeiP_CS"/>
</dbReference>
<dbReference type="InterPro" id="IPR011768">
    <property type="entry name" value="Transl_elongation_fac_P"/>
</dbReference>
<dbReference type="InterPro" id="IPR008991">
    <property type="entry name" value="Translation_prot_SH3-like_sf"/>
</dbReference>
<dbReference type="NCBIfam" id="TIGR00038">
    <property type="entry name" value="efp"/>
    <property type="match status" value="1"/>
</dbReference>
<dbReference type="NCBIfam" id="NF001810">
    <property type="entry name" value="PRK00529.1"/>
    <property type="match status" value="1"/>
</dbReference>
<dbReference type="PANTHER" id="PTHR30053">
    <property type="entry name" value="ELONGATION FACTOR P"/>
    <property type="match status" value="1"/>
</dbReference>
<dbReference type="PANTHER" id="PTHR30053:SF12">
    <property type="entry name" value="ELONGATION FACTOR P (EF-P) FAMILY PROTEIN"/>
    <property type="match status" value="1"/>
</dbReference>
<dbReference type="Pfam" id="PF01132">
    <property type="entry name" value="EFP"/>
    <property type="match status" value="1"/>
</dbReference>
<dbReference type="Pfam" id="PF08207">
    <property type="entry name" value="EFP_N"/>
    <property type="match status" value="1"/>
</dbReference>
<dbReference type="Pfam" id="PF09285">
    <property type="entry name" value="Elong-fact-P_C"/>
    <property type="match status" value="1"/>
</dbReference>
<dbReference type="PIRSF" id="PIRSF005901">
    <property type="entry name" value="EF-P"/>
    <property type="match status" value="1"/>
</dbReference>
<dbReference type="SMART" id="SM01185">
    <property type="entry name" value="EFP"/>
    <property type="match status" value="1"/>
</dbReference>
<dbReference type="SMART" id="SM00841">
    <property type="entry name" value="Elong-fact-P_C"/>
    <property type="match status" value="1"/>
</dbReference>
<dbReference type="SUPFAM" id="SSF50249">
    <property type="entry name" value="Nucleic acid-binding proteins"/>
    <property type="match status" value="2"/>
</dbReference>
<dbReference type="SUPFAM" id="SSF50104">
    <property type="entry name" value="Translation proteins SH3-like domain"/>
    <property type="match status" value="1"/>
</dbReference>
<dbReference type="PROSITE" id="PS01275">
    <property type="entry name" value="EFP"/>
    <property type="match status" value="1"/>
</dbReference>
<comment type="function">
    <text evidence="1">Involved in peptide bond synthesis. Stimulates efficient translation and peptide-bond synthesis on native or reconstituted 70S ribosomes in vitro. Probably functions indirectly by altering the affinity of the ribosome for aminoacyl-tRNA, thus increasing their reactivity as acceptors for peptidyl transferase.</text>
</comment>
<comment type="pathway">
    <text evidence="1">Protein biosynthesis; polypeptide chain elongation.</text>
</comment>
<comment type="subcellular location">
    <subcellularLocation>
        <location evidence="1">Cytoplasm</location>
    </subcellularLocation>
</comment>
<comment type="similarity">
    <text evidence="1">Belongs to the elongation factor P family.</text>
</comment>
<keyword id="KW-0963">Cytoplasm</keyword>
<keyword id="KW-0251">Elongation factor</keyword>
<keyword id="KW-0648">Protein biosynthesis</keyword>
<keyword id="KW-1185">Reference proteome</keyword>
<protein>
    <recommendedName>
        <fullName evidence="1">Elongation factor P</fullName>
        <shortName evidence="1">EF-P</shortName>
    </recommendedName>
</protein>
<proteinExistence type="inferred from homology"/>
<name>EFP_MYCMS</name>